<organism>
    <name type="scientific">Streptococcus pneumoniae (strain CGSP14)</name>
    <dbReference type="NCBI Taxonomy" id="516950"/>
    <lineage>
        <taxon>Bacteria</taxon>
        <taxon>Bacillati</taxon>
        <taxon>Bacillota</taxon>
        <taxon>Bacilli</taxon>
        <taxon>Lactobacillales</taxon>
        <taxon>Streptococcaceae</taxon>
        <taxon>Streptococcus</taxon>
    </lineage>
</organism>
<comment type="function">
    <text evidence="1">Bidirectionally degrades single-stranded DNA into large acid-insoluble oligonucleotides, which are then degraded further into small acid-soluble oligonucleotides.</text>
</comment>
<comment type="catalytic activity">
    <reaction evidence="1">
        <text>Exonucleolytic cleavage in either 5'- to 3'- or 3'- to 5'-direction to yield nucleoside 5'-phosphates.</text>
        <dbReference type="EC" id="3.1.11.6"/>
    </reaction>
</comment>
<comment type="subunit">
    <text evidence="1">Heterooligomer composed of large and small subunits.</text>
</comment>
<comment type="subcellular location">
    <subcellularLocation>
        <location evidence="1">Cytoplasm</location>
    </subcellularLocation>
</comment>
<comment type="similarity">
    <text evidence="1">Belongs to the XseB family.</text>
</comment>
<feature type="chain" id="PRO_1000119963" description="Exodeoxyribonuclease 7 small subunit">
    <location>
        <begin position="1"/>
        <end position="70"/>
    </location>
</feature>
<name>EX7S_STRPS</name>
<keyword id="KW-0963">Cytoplasm</keyword>
<keyword id="KW-0269">Exonuclease</keyword>
<keyword id="KW-0378">Hydrolase</keyword>
<keyword id="KW-0540">Nuclease</keyword>
<proteinExistence type="inferred from homology"/>
<dbReference type="EC" id="3.1.11.6" evidence="1"/>
<dbReference type="EMBL" id="CP001033">
    <property type="protein sequence ID" value="ACB90346.1"/>
    <property type="molecule type" value="Genomic_DNA"/>
</dbReference>
<dbReference type="RefSeq" id="WP_000043230.1">
    <property type="nucleotide sequence ID" value="NC_010582.1"/>
</dbReference>
<dbReference type="SMR" id="B2IPS4"/>
<dbReference type="KEGG" id="spw:SPCG_1094"/>
<dbReference type="HOGENOM" id="CLU_145918_3_2_9"/>
<dbReference type="GO" id="GO:0005829">
    <property type="term" value="C:cytosol"/>
    <property type="evidence" value="ECO:0007669"/>
    <property type="project" value="TreeGrafter"/>
</dbReference>
<dbReference type="GO" id="GO:0009318">
    <property type="term" value="C:exodeoxyribonuclease VII complex"/>
    <property type="evidence" value="ECO:0007669"/>
    <property type="project" value="InterPro"/>
</dbReference>
<dbReference type="GO" id="GO:0008855">
    <property type="term" value="F:exodeoxyribonuclease VII activity"/>
    <property type="evidence" value="ECO:0007669"/>
    <property type="project" value="UniProtKB-UniRule"/>
</dbReference>
<dbReference type="GO" id="GO:0006308">
    <property type="term" value="P:DNA catabolic process"/>
    <property type="evidence" value="ECO:0007669"/>
    <property type="project" value="UniProtKB-UniRule"/>
</dbReference>
<dbReference type="FunFam" id="1.10.287.1040:FF:000003">
    <property type="entry name" value="Exodeoxyribonuclease 7 small subunit"/>
    <property type="match status" value="1"/>
</dbReference>
<dbReference type="Gene3D" id="1.10.287.1040">
    <property type="entry name" value="Exonuclease VII, small subunit"/>
    <property type="match status" value="1"/>
</dbReference>
<dbReference type="HAMAP" id="MF_00337">
    <property type="entry name" value="Exonuc_7_S"/>
    <property type="match status" value="1"/>
</dbReference>
<dbReference type="InterPro" id="IPR003761">
    <property type="entry name" value="Exonuc_VII_S"/>
</dbReference>
<dbReference type="InterPro" id="IPR037004">
    <property type="entry name" value="Exonuc_VII_ssu_sf"/>
</dbReference>
<dbReference type="NCBIfam" id="NF002138">
    <property type="entry name" value="PRK00977.1-2"/>
    <property type="match status" value="1"/>
</dbReference>
<dbReference type="NCBIfam" id="TIGR01280">
    <property type="entry name" value="xseB"/>
    <property type="match status" value="1"/>
</dbReference>
<dbReference type="PANTHER" id="PTHR34137">
    <property type="entry name" value="EXODEOXYRIBONUCLEASE 7 SMALL SUBUNIT"/>
    <property type="match status" value="1"/>
</dbReference>
<dbReference type="PANTHER" id="PTHR34137:SF1">
    <property type="entry name" value="EXODEOXYRIBONUCLEASE 7 SMALL SUBUNIT"/>
    <property type="match status" value="1"/>
</dbReference>
<dbReference type="Pfam" id="PF02609">
    <property type="entry name" value="Exonuc_VII_S"/>
    <property type="match status" value="1"/>
</dbReference>
<dbReference type="PIRSF" id="PIRSF006488">
    <property type="entry name" value="Exonuc_VII_S"/>
    <property type="match status" value="1"/>
</dbReference>
<dbReference type="SUPFAM" id="SSF116842">
    <property type="entry name" value="XseB-like"/>
    <property type="match status" value="1"/>
</dbReference>
<evidence type="ECO:0000255" key="1">
    <source>
        <dbReference type="HAMAP-Rule" id="MF_00337"/>
    </source>
</evidence>
<reference key="1">
    <citation type="journal article" date="2009" name="BMC Genomics">
        <title>Genome evolution driven by host adaptations results in a more virulent and antimicrobial-resistant Streptococcus pneumoniae serotype 14.</title>
        <authorList>
            <person name="Ding F."/>
            <person name="Tang P."/>
            <person name="Hsu M.-H."/>
            <person name="Cui P."/>
            <person name="Hu S."/>
            <person name="Yu J."/>
            <person name="Chiu C.-H."/>
        </authorList>
    </citation>
    <scope>NUCLEOTIDE SEQUENCE [LARGE SCALE GENOMIC DNA]</scope>
    <source>
        <strain>CGSP14</strain>
    </source>
</reference>
<gene>
    <name evidence="1" type="primary">xseB</name>
    <name type="ordered locus">SPCG_1094</name>
</gene>
<sequence>MSKQKKFEENLAELETIVQSLENGEIALEDAITAFQKGMVLSKELQATLDKAEKTLVKVMQEDGTESDFE</sequence>
<protein>
    <recommendedName>
        <fullName evidence="1">Exodeoxyribonuclease 7 small subunit</fullName>
        <ecNumber evidence="1">3.1.11.6</ecNumber>
    </recommendedName>
    <alternativeName>
        <fullName evidence="1">Exodeoxyribonuclease VII small subunit</fullName>
        <shortName evidence="1">Exonuclease VII small subunit</shortName>
    </alternativeName>
</protein>
<accession>B2IPS4</accession>